<feature type="signal peptide" evidence="3">
    <location>
        <begin position="1"/>
        <end position="26"/>
    </location>
</feature>
<feature type="chain" id="PRO_0000262687" description="Kappa-conotoxin-like Sx11.2">
    <location>
        <begin position="27"/>
        <end position="57"/>
    </location>
</feature>
<feature type="propeptide" id="PRO_0000262688">
    <location>
        <begin position="61"/>
        <end position="70"/>
    </location>
</feature>
<feature type="modified residue" description="4-carboxyglutamate" evidence="1">
    <location>
        <position position="30"/>
    </location>
</feature>
<feature type="modified residue" description="4-carboxyglutamate" evidence="1">
    <location>
        <position position="35"/>
    </location>
</feature>
<feature type="modified residue" description="4-carboxyglutamate" evidence="1">
    <location>
        <position position="44"/>
    </location>
</feature>
<feature type="modified residue" description="4-hydroxyproline" evidence="1">
    <location>
        <position position="53"/>
    </location>
</feature>
<feature type="modified residue" description="Proline amide" evidence="1">
    <location>
        <position position="57"/>
    </location>
</feature>
<feature type="disulfide bond" evidence="2">
    <location>
        <begin position="27"/>
        <end position="41"/>
    </location>
</feature>
<feature type="disulfide bond" evidence="2">
    <location>
        <begin position="34"/>
        <end position="46"/>
    </location>
</feature>
<feature type="disulfide bond" evidence="2">
    <location>
        <begin position="40"/>
        <end position="50"/>
    </location>
</feature>
<feature type="disulfide bond" evidence="2">
    <location>
        <begin position="45"/>
        <end position="54"/>
    </location>
</feature>
<name>I2B2_CONSR</name>
<keyword id="KW-0027">Amidation</keyword>
<keyword id="KW-0165">Cleavage on pair of basic residues</keyword>
<keyword id="KW-1015">Disulfide bond</keyword>
<keyword id="KW-0301">Gamma-carboxyglutamic acid</keyword>
<keyword id="KW-0379">Hydroxylation</keyword>
<keyword id="KW-0872">Ion channel impairing toxin</keyword>
<keyword id="KW-0528">Neurotoxin</keyword>
<keyword id="KW-0632">Potassium channel impairing toxin</keyword>
<keyword id="KW-0964">Secreted</keyword>
<keyword id="KW-0732">Signal</keyword>
<keyword id="KW-0800">Toxin</keyword>
<sequence>MMFRVTSVGCLLLVIVFLNLVVPTSACRAEGTYCENDSQCCLNECCWGGCGHPCRHPGKRSKLQEFFRQR</sequence>
<protein>
    <recommendedName>
        <fullName>Kappa-conotoxin-like Sx11.2</fullName>
    </recommendedName>
</protein>
<evidence type="ECO:0000250" key="1"/>
<evidence type="ECO:0000250" key="2">
    <source>
        <dbReference type="UniProtKB" id="Q7Z094"/>
    </source>
</evidence>
<evidence type="ECO:0000255" key="3"/>
<evidence type="ECO:0000305" key="4"/>
<comment type="function">
    <text evidence="1">Modulator of potassium channels, specifically up-modulates the calcium and voltage-gated BK channels, has no effect on single channel conductance, but increases the open probability of BK channels.</text>
</comment>
<comment type="subcellular location">
    <subcellularLocation>
        <location evidence="1">Secreted</location>
    </subcellularLocation>
</comment>
<comment type="tissue specificity">
    <text>Expressed by the venom duct.</text>
</comment>
<comment type="domain">
    <text>The cysteine framework is XI (C-C-CC-CC-C-C).</text>
</comment>
<comment type="similarity">
    <text evidence="4">Belongs to the conotoxin I2 superfamily.</text>
</comment>
<proteinExistence type="evidence at transcript level"/>
<reference key="1">
    <citation type="journal article" date="2005" name="FEBS J.">
        <title>Characterization of D-amino-acid-containing excitatory conotoxins and redefinition of the I-conotoxin superfamily.</title>
        <authorList>
            <person name="Buczek O."/>
            <person name="Yoshikami D."/>
            <person name="Watkins M."/>
            <person name="Bulaj G."/>
            <person name="Jimenez E.C."/>
            <person name="Olivera B.M."/>
        </authorList>
    </citation>
    <scope>NUCLEOTIDE SEQUENCE [MRNA]</scope>
    <source>
        <tissue>Venom duct</tissue>
    </source>
</reference>
<reference key="2">
    <citation type="journal article" date="2005" name="FEBS J.">
        <authorList>
            <person name="Buczek O."/>
            <person name="Yoshikami D."/>
            <person name="Watkins M."/>
            <person name="Bulaj G."/>
            <person name="Jimenez E.C."/>
            <person name="Olivera B.M."/>
        </authorList>
    </citation>
    <scope>ERRATUM OF PUBMED:16098199</scope>
</reference>
<accession>P0C258</accession>
<dbReference type="SMR" id="P0C258"/>
<dbReference type="ConoServer" id="1452">
    <property type="toxin name" value="Sx11.2 precursor"/>
</dbReference>
<dbReference type="GO" id="GO:0005576">
    <property type="term" value="C:extracellular region"/>
    <property type="evidence" value="ECO:0007669"/>
    <property type="project" value="UniProtKB-SubCell"/>
</dbReference>
<dbReference type="GO" id="GO:0015459">
    <property type="term" value="F:potassium channel regulator activity"/>
    <property type="evidence" value="ECO:0007669"/>
    <property type="project" value="UniProtKB-KW"/>
</dbReference>
<dbReference type="GO" id="GO:0090729">
    <property type="term" value="F:toxin activity"/>
    <property type="evidence" value="ECO:0007669"/>
    <property type="project" value="UniProtKB-KW"/>
</dbReference>
<dbReference type="InterPro" id="IPR013141">
    <property type="entry name" value="Conotoxin-I_CS"/>
</dbReference>
<dbReference type="InterPro" id="IPR020242">
    <property type="entry name" value="Conotoxin_I2"/>
</dbReference>
<dbReference type="Pfam" id="PF17557">
    <property type="entry name" value="Conotoxin_I2"/>
    <property type="match status" value="1"/>
</dbReference>
<dbReference type="PROSITE" id="PS60019">
    <property type="entry name" value="I_CONOTOXIN"/>
    <property type="match status" value="1"/>
</dbReference>
<organism>
    <name type="scientific">Conus striolatus</name>
    <name type="common">Cone snail</name>
    <dbReference type="NCBI Taxonomy" id="101315"/>
    <lineage>
        <taxon>Eukaryota</taxon>
        <taxon>Metazoa</taxon>
        <taxon>Spiralia</taxon>
        <taxon>Lophotrochozoa</taxon>
        <taxon>Mollusca</taxon>
        <taxon>Gastropoda</taxon>
        <taxon>Caenogastropoda</taxon>
        <taxon>Neogastropoda</taxon>
        <taxon>Conoidea</taxon>
        <taxon>Conidae</taxon>
        <taxon>Conus</taxon>
        <taxon>Pionoconus</taxon>
    </lineage>
</organism>